<dbReference type="EC" id="2.1.1.177" evidence="1"/>
<dbReference type="EMBL" id="CP000896">
    <property type="protein sequence ID" value="ABX80838.1"/>
    <property type="molecule type" value="Genomic_DNA"/>
</dbReference>
<dbReference type="RefSeq" id="WP_012242169.1">
    <property type="nucleotide sequence ID" value="NC_010163.1"/>
</dbReference>
<dbReference type="SMR" id="A9NEQ8"/>
<dbReference type="STRING" id="441768.ACL_0212"/>
<dbReference type="GeneID" id="41338403"/>
<dbReference type="KEGG" id="acl:ACL_0212"/>
<dbReference type="eggNOG" id="COG1576">
    <property type="taxonomic scope" value="Bacteria"/>
</dbReference>
<dbReference type="HOGENOM" id="CLU_100552_0_0_14"/>
<dbReference type="OrthoDB" id="9806643at2"/>
<dbReference type="Proteomes" id="UP000008558">
    <property type="component" value="Chromosome"/>
</dbReference>
<dbReference type="GO" id="GO:0005737">
    <property type="term" value="C:cytoplasm"/>
    <property type="evidence" value="ECO:0007669"/>
    <property type="project" value="UniProtKB-SubCell"/>
</dbReference>
<dbReference type="GO" id="GO:0070038">
    <property type="term" value="F:rRNA (pseudouridine-N3-)-methyltransferase activity"/>
    <property type="evidence" value="ECO:0007669"/>
    <property type="project" value="UniProtKB-UniRule"/>
</dbReference>
<dbReference type="CDD" id="cd18081">
    <property type="entry name" value="RlmH-like"/>
    <property type="match status" value="1"/>
</dbReference>
<dbReference type="Gene3D" id="3.40.1280.10">
    <property type="match status" value="1"/>
</dbReference>
<dbReference type="HAMAP" id="MF_00658">
    <property type="entry name" value="23SrRNA_methyltr_H"/>
    <property type="match status" value="1"/>
</dbReference>
<dbReference type="InterPro" id="IPR029028">
    <property type="entry name" value="Alpha/beta_knot_MTases"/>
</dbReference>
<dbReference type="InterPro" id="IPR003742">
    <property type="entry name" value="RlmH-like"/>
</dbReference>
<dbReference type="InterPro" id="IPR029026">
    <property type="entry name" value="tRNA_m1G_MTases_N"/>
</dbReference>
<dbReference type="PANTHER" id="PTHR33603">
    <property type="entry name" value="METHYLTRANSFERASE"/>
    <property type="match status" value="1"/>
</dbReference>
<dbReference type="PANTHER" id="PTHR33603:SF1">
    <property type="entry name" value="RIBOSOMAL RNA LARGE SUBUNIT METHYLTRANSFERASE H"/>
    <property type="match status" value="1"/>
</dbReference>
<dbReference type="Pfam" id="PF02590">
    <property type="entry name" value="SPOUT_MTase"/>
    <property type="match status" value="1"/>
</dbReference>
<dbReference type="PIRSF" id="PIRSF004505">
    <property type="entry name" value="MT_bac"/>
    <property type="match status" value="1"/>
</dbReference>
<dbReference type="SUPFAM" id="SSF75217">
    <property type="entry name" value="alpha/beta knot"/>
    <property type="match status" value="1"/>
</dbReference>
<sequence>MKVKIISVGKVKDKGLNELINYYAKQIKTIEMVEITDEASITGMEKEGQKILSKIAKDSYVISLAIEGKMLDSVEFADTLDHVTTNFGPSITFIIGGSFGLSHAVKEKSNLLLSFSKMTFPHQLMKLFLVEQIFRAQAILNNHPYHK</sequence>
<protein>
    <recommendedName>
        <fullName evidence="1">Ribosomal RNA large subunit methyltransferase H</fullName>
        <ecNumber evidence="1">2.1.1.177</ecNumber>
    </recommendedName>
    <alternativeName>
        <fullName evidence="1">23S rRNA (pseudouridine1915-N3)-methyltransferase</fullName>
    </alternativeName>
    <alternativeName>
        <fullName evidence="1">23S rRNA m3Psi1915 methyltransferase</fullName>
    </alternativeName>
    <alternativeName>
        <fullName evidence="1">rRNA (pseudouridine-N3-)-methyltransferase RlmH</fullName>
    </alternativeName>
</protein>
<reference key="1">
    <citation type="journal article" date="2011" name="J. Bacteriol.">
        <title>Complete genome and proteome of Acholeplasma laidlawii.</title>
        <authorList>
            <person name="Lazarev V.N."/>
            <person name="Levitskii S.A."/>
            <person name="Basovskii Y.I."/>
            <person name="Chukin M.M."/>
            <person name="Akopian T.A."/>
            <person name="Vereshchagin V.V."/>
            <person name="Kostrjukova E.S."/>
            <person name="Kovaleva G.Y."/>
            <person name="Kazanov M.D."/>
            <person name="Malko D.B."/>
            <person name="Vitreschak A.G."/>
            <person name="Sernova N.V."/>
            <person name="Gelfand M.S."/>
            <person name="Demina I.A."/>
            <person name="Serebryakova M.V."/>
            <person name="Galyamina M.A."/>
            <person name="Vtyurin N.N."/>
            <person name="Rogov S.I."/>
            <person name="Alexeev D.G."/>
            <person name="Ladygina V.G."/>
            <person name="Govorun V.M."/>
        </authorList>
    </citation>
    <scope>NUCLEOTIDE SEQUENCE [LARGE SCALE GENOMIC DNA]</scope>
    <source>
        <strain>PG-8A</strain>
    </source>
</reference>
<proteinExistence type="inferred from homology"/>
<comment type="function">
    <text evidence="1">Specifically methylates the pseudouridine at position 1915 (m3Psi1915) in 23S rRNA.</text>
</comment>
<comment type="catalytic activity">
    <reaction evidence="1">
        <text>pseudouridine(1915) in 23S rRNA + S-adenosyl-L-methionine = N(3)-methylpseudouridine(1915) in 23S rRNA + S-adenosyl-L-homocysteine + H(+)</text>
        <dbReference type="Rhea" id="RHEA:42752"/>
        <dbReference type="Rhea" id="RHEA-COMP:10221"/>
        <dbReference type="Rhea" id="RHEA-COMP:10222"/>
        <dbReference type="ChEBI" id="CHEBI:15378"/>
        <dbReference type="ChEBI" id="CHEBI:57856"/>
        <dbReference type="ChEBI" id="CHEBI:59789"/>
        <dbReference type="ChEBI" id="CHEBI:65314"/>
        <dbReference type="ChEBI" id="CHEBI:74486"/>
        <dbReference type="EC" id="2.1.1.177"/>
    </reaction>
</comment>
<comment type="subunit">
    <text evidence="1">Homodimer.</text>
</comment>
<comment type="subcellular location">
    <subcellularLocation>
        <location evidence="1">Cytoplasm</location>
    </subcellularLocation>
</comment>
<comment type="similarity">
    <text evidence="1">Belongs to the RNA methyltransferase RlmH family.</text>
</comment>
<organism>
    <name type="scientific">Acholeplasma laidlawii (strain PG-8A)</name>
    <dbReference type="NCBI Taxonomy" id="441768"/>
    <lineage>
        <taxon>Bacteria</taxon>
        <taxon>Bacillati</taxon>
        <taxon>Mycoplasmatota</taxon>
        <taxon>Mollicutes</taxon>
        <taxon>Acholeplasmatales</taxon>
        <taxon>Acholeplasmataceae</taxon>
        <taxon>Acholeplasma</taxon>
    </lineage>
</organism>
<accession>A9NEQ8</accession>
<gene>
    <name evidence="1" type="primary">rlmH</name>
    <name type="ordered locus">ACL_0212</name>
</gene>
<evidence type="ECO:0000255" key="1">
    <source>
        <dbReference type="HAMAP-Rule" id="MF_00658"/>
    </source>
</evidence>
<feature type="chain" id="PRO_1000082792" description="Ribosomal RNA large subunit methyltransferase H">
    <location>
        <begin position="1"/>
        <end position="147"/>
    </location>
</feature>
<feature type="binding site" evidence="1">
    <location>
        <position position="64"/>
    </location>
    <ligand>
        <name>S-adenosyl-L-methionine</name>
        <dbReference type="ChEBI" id="CHEBI:59789"/>
    </ligand>
</feature>
<feature type="binding site" evidence="1">
    <location>
        <position position="96"/>
    </location>
    <ligand>
        <name>S-adenosyl-L-methionine</name>
        <dbReference type="ChEBI" id="CHEBI:59789"/>
    </ligand>
</feature>
<feature type="binding site" evidence="1">
    <location>
        <begin position="115"/>
        <end position="120"/>
    </location>
    <ligand>
        <name>S-adenosyl-L-methionine</name>
        <dbReference type="ChEBI" id="CHEBI:59789"/>
    </ligand>
</feature>
<name>RLMH_ACHLI</name>
<keyword id="KW-0963">Cytoplasm</keyword>
<keyword id="KW-0489">Methyltransferase</keyword>
<keyword id="KW-1185">Reference proteome</keyword>
<keyword id="KW-0698">rRNA processing</keyword>
<keyword id="KW-0949">S-adenosyl-L-methionine</keyword>
<keyword id="KW-0808">Transferase</keyword>